<evidence type="ECO:0000255" key="1">
    <source>
        <dbReference type="HAMAP-Rule" id="MF_00639"/>
    </source>
</evidence>
<gene>
    <name evidence="1" type="primary">murD</name>
    <name type="ordered locus">HD_0245</name>
</gene>
<organism>
    <name type="scientific">Haemophilus ducreyi (strain 35000HP / ATCC 700724)</name>
    <dbReference type="NCBI Taxonomy" id="233412"/>
    <lineage>
        <taxon>Bacteria</taxon>
        <taxon>Pseudomonadati</taxon>
        <taxon>Pseudomonadota</taxon>
        <taxon>Gammaproteobacteria</taxon>
        <taxon>Pasteurellales</taxon>
        <taxon>Pasteurellaceae</taxon>
        <taxon>Haemophilus</taxon>
    </lineage>
</organism>
<comment type="function">
    <text evidence="1">Cell wall formation. Catalyzes the addition of glutamate to the nucleotide precursor UDP-N-acetylmuramoyl-L-alanine (UMA).</text>
</comment>
<comment type="catalytic activity">
    <reaction evidence="1">
        <text>UDP-N-acetyl-alpha-D-muramoyl-L-alanine + D-glutamate + ATP = UDP-N-acetyl-alpha-D-muramoyl-L-alanyl-D-glutamate + ADP + phosphate + H(+)</text>
        <dbReference type="Rhea" id="RHEA:16429"/>
        <dbReference type="ChEBI" id="CHEBI:15378"/>
        <dbReference type="ChEBI" id="CHEBI:29986"/>
        <dbReference type="ChEBI" id="CHEBI:30616"/>
        <dbReference type="ChEBI" id="CHEBI:43474"/>
        <dbReference type="ChEBI" id="CHEBI:83898"/>
        <dbReference type="ChEBI" id="CHEBI:83900"/>
        <dbReference type="ChEBI" id="CHEBI:456216"/>
        <dbReference type="EC" id="6.3.2.9"/>
    </reaction>
</comment>
<comment type="pathway">
    <text evidence="1">Cell wall biogenesis; peptidoglycan biosynthesis.</text>
</comment>
<comment type="subcellular location">
    <subcellularLocation>
        <location evidence="1">Cytoplasm</location>
    </subcellularLocation>
</comment>
<comment type="similarity">
    <text evidence="1">Belongs to the MurCDEF family.</text>
</comment>
<name>MURD_HAEDU</name>
<keyword id="KW-0067">ATP-binding</keyword>
<keyword id="KW-0131">Cell cycle</keyword>
<keyword id="KW-0132">Cell division</keyword>
<keyword id="KW-0133">Cell shape</keyword>
<keyword id="KW-0961">Cell wall biogenesis/degradation</keyword>
<keyword id="KW-0963">Cytoplasm</keyword>
<keyword id="KW-0436">Ligase</keyword>
<keyword id="KW-0547">Nucleotide-binding</keyword>
<keyword id="KW-0573">Peptidoglycan synthesis</keyword>
<keyword id="KW-1185">Reference proteome</keyword>
<dbReference type="EC" id="6.3.2.9" evidence="1"/>
<dbReference type="EMBL" id="AE017143">
    <property type="protein sequence ID" value="AAP95231.1"/>
    <property type="molecule type" value="Genomic_DNA"/>
</dbReference>
<dbReference type="SMR" id="Q7VP56"/>
<dbReference type="STRING" id="233412.HD_0245"/>
<dbReference type="KEGG" id="hdu:HD_0245"/>
<dbReference type="eggNOG" id="COG0771">
    <property type="taxonomic scope" value="Bacteria"/>
</dbReference>
<dbReference type="HOGENOM" id="CLU_032540_1_0_6"/>
<dbReference type="UniPathway" id="UPA00219"/>
<dbReference type="Proteomes" id="UP000001022">
    <property type="component" value="Chromosome"/>
</dbReference>
<dbReference type="GO" id="GO:0005737">
    <property type="term" value="C:cytoplasm"/>
    <property type="evidence" value="ECO:0007669"/>
    <property type="project" value="UniProtKB-SubCell"/>
</dbReference>
<dbReference type="GO" id="GO:0005524">
    <property type="term" value="F:ATP binding"/>
    <property type="evidence" value="ECO:0007669"/>
    <property type="project" value="UniProtKB-UniRule"/>
</dbReference>
<dbReference type="GO" id="GO:0008764">
    <property type="term" value="F:UDP-N-acetylmuramoylalanine-D-glutamate ligase activity"/>
    <property type="evidence" value="ECO:0007669"/>
    <property type="project" value="UniProtKB-UniRule"/>
</dbReference>
<dbReference type="GO" id="GO:0051301">
    <property type="term" value="P:cell division"/>
    <property type="evidence" value="ECO:0007669"/>
    <property type="project" value="UniProtKB-KW"/>
</dbReference>
<dbReference type="GO" id="GO:0071555">
    <property type="term" value="P:cell wall organization"/>
    <property type="evidence" value="ECO:0007669"/>
    <property type="project" value="UniProtKB-KW"/>
</dbReference>
<dbReference type="GO" id="GO:0009252">
    <property type="term" value="P:peptidoglycan biosynthetic process"/>
    <property type="evidence" value="ECO:0007669"/>
    <property type="project" value="UniProtKB-UniRule"/>
</dbReference>
<dbReference type="GO" id="GO:0008360">
    <property type="term" value="P:regulation of cell shape"/>
    <property type="evidence" value="ECO:0007669"/>
    <property type="project" value="UniProtKB-KW"/>
</dbReference>
<dbReference type="Gene3D" id="3.90.190.20">
    <property type="entry name" value="Mur ligase, C-terminal domain"/>
    <property type="match status" value="1"/>
</dbReference>
<dbReference type="Gene3D" id="3.40.1190.10">
    <property type="entry name" value="Mur-like, catalytic domain"/>
    <property type="match status" value="1"/>
</dbReference>
<dbReference type="Gene3D" id="3.40.50.720">
    <property type="entry name" value="NAD(P)-binding Rossmann-like Domain"/>
    <property type="match status" value="1"/>
</dbReference>
<dbReference type="HAMAP" id="MF_00639">
    <property type="entry name" value="MurD"/>
    <property type="match status" value="1"/>
</dbReference>
<dbReference type="InterPro" id="IPR036565">
    <property type="entry name" value="Mur-like_cat_sf"/>
</dbReference>
<dbReference type="InterPro" id="IPR004101">
    <property type="entry name" value="Mur_ligase_C"/>
</dbReference>
<dbReference type="InterPro" id="IPR036615">
    <property type="entry name" value="Mur_ligase_C_dom_sf"/>
</dbReference>
<dbReference type="InterPro" id="IPR013221">
    <property type="entry name" value="Mur_ligase_cen"/>
</dbReference>
<dbReference type="InterPro" id="IPR005762">
    <property type="entry name" value="MurD"/>
</dbReference>
<dbReference type="NCBIfam" id="TIGR01087">
    <property type="entry name" value="murD"/>
    <property type="match status" value="1"/>
</dbReference>
<dbReference type="PANTHER" id="PTHR43692">
    <property type="entry name" value="UDP-N-ACETYLMURAMOYLALANINE--D-GLUTAMATE LIGASE"/>
    <property type="match status" value="1"/>
</dbReference>
<dbReference type="PANTHER" id="PTHR43692:SF1">
    <property type="entry name" value="UDP-N-ACETYLMURAMOYLALANINE--D-GLUTAMATE LIGASE"/>
    <property type="match status" value="1"/>
</dbReference>
<dbReference type="Pfam" id="PF02875">
    <property type="entry name" value="Mur_ligase_C"/>
    <property type="match status" value="1"/>
</dbReference>
<dbReference type="Pfam" id="PF08245">
    <property type="entry name" value="Mur_ligase_M"/>
    <property type="match status" value="1"/>
</dbReference>
<dbReference type="Pfam" id="PF21799">
    <property type="entry name" value="MurD-like_N"/>
    <property type="match status" value="1"/>
</dbReference>
<dbReference type="SUPFAM" id="SSF51984">
    <property type="entry name" value="MurCD N-terminal domain"/>
    <property type="match status" value="1"/>
</dbReference>
<dbReference type="SUPFAM" id="SSF53623">
    <property type="entry name" value="MurD-like peptide ligases, catalytic domain"/>
    <property type="match status" value="1"/>
</dbReference>
<dbReference type="SUPFAM" id="SSF53244">
    <property type="entry name" value="MurD-like peptide ligases, peptide-binding domain"/>
    <property type="match status" value="1"/>
</dbReference>
<protein>
    <recommendedName>
        <fullName evidence="1">UDP-N-acetylmuramoylalanine--D-glutamate ligase</fullName>
        <ecNumber evidence="1">6.3.2.9</ecNumber>
    </recommendedName>
    <alternativeName>
        <fullName evidence="1">D-glutamic acid-adding enzyme</fullName>
    </alternativeName>
    <alternativeName>
        <fullName evidence="1">UDP-N-acetylmuramoyl-L-alanyl-D-glutamate synthetase</fullName>
    </alternativeName>
</protein>
<sequence length="435" mass="46831">MMQNQYQGKIITIVGLGKTGLSCVAFFAEKQATIQVIDTREQPAGIEHLSDNVALHTGSLNLEWLLASDLIVMSPGLALATPEIQTAIQAGIEVVGDIELFVREAKAPIIAITGSNGKSTVTTLVSEMAQQAGIKVGMGGNIGIPALSLLNKGYELFVLELSSFQLETTYSLKAKAATILNVSQDHMDRYASGEHYRQAKLRIYENAEYVIVNDDDPLTYPLPSQSVGNLRHFAEHDAQYAIKYDQLCSGDQAVINTDQMLLTGRHNQLNALAAIALAEAAGINRTGIINGLRCYGGLAHRFQRVPTNDGVCWVNDSKATNVGSTVAALNGLPLSGTLYLLLGGDGKGADFSMLKALVNQPHIVCYCFGKDGKSLAELTTNSVLVDTMQQAIEQIRPLVKQGDMVLLSPACASLDQFNNFEERGDMFARLAQQAV</sequence>
<accession>Q7VP56</accession>
<feature type="chain" id="PRO_0000109022" description="UDP-N-acetylmuramoylalanine--D-glutamate ligase">
    <location>
        <begin position="1"/>
        <end position="435"/>
    </location>
</feature>
<feature type="binding site" evidence="1">
    <location>
        <begin position="114"/>
        <end position="120"/>
    </location>
    <ligand>
        <name>ATP</name>
        <dbReference type="ChEBI" id="CHEBI:30616"/>
    </ligand>
</feature>
<proteinExistence type="inferred from homology"/>
<reference key="1">
    <citation type="submission" date="2003-06" db="EMBL/GenBank/DDBJ databases">
        <title>The complete genome sequence of Haemophilus ducreyi.</title>
        <authorList>
            <person name="Munson R.S. Jr."/>
            <person name="Ray W.C."/>
            <person name="Mahairas G."/>
            <person name="Sabo P."/>
            <person name="Mungur R."/>
            <person name="Johnson L."/>
            <person name="Nguyen D."/>
            <person name="Wang J."/>
            <person name="Forst C."/>
            <person name="Hood L."/>
        </authorList>
    </citation>
    <scope>NUCLEOTIDE SEQUENCE [LARGE SCALE GENOMIC DNA]</scope>
    <source>
        <strain>35000HP / ATCC 700724</strain>
    </source>
</reference>